<feature type="chain" id="PRO_1000095402" description="Arginine--tRNA ligase">
    <location>
        <begin position="1"/>
        <end position="577"/>
    </location>
</feature>
<feature type="short sequence motif" description="'HIGH' region">
    <location>
        <begin position="122"/>
        <end position="132"/>
    </location>
</feature>
<comment type="catalytic activity">
    <reaction evidence="1">
        <text>tRNA(Arg) + L-arginine + ATP = L-arginyl-tRNA(Arg) + AMP + diphosphate</text>
        <dbReference type="Rhea" id="RHEA:20301"/>
        <dbReference type="Rhea" id="RHEA-COMP:9658"/>
        <dbReference type="Rhea" id="RHEA-COMP:9673"/>
        <dbReference type="ChEBI" id="CHEBI:30616"/>
        <dbReference type="ChEBI" id="CHEBI:32682"/>
        <dbReference type="ChEBI" id="CHEBI:33019"/>
        <dbReference type="ChEBI" id="CHEBI:78442"/>
        <dbReference type="ChEBI" id="CHEBI:78513"/>
        <dbReference type="ChEBI" id="CHEBI:456215"/>
        <dbReference type="EC" id="6.1.1.19"/>
    </reaction>
</comment>
<comment type="subunit">
    <text evidence="1">Monomer.</text>
</comment>
<comment type="subcellular location">
    <subcellularLocation>
        <location evidence="1">Cytoplasm</location>
    </subcellularLocation>
</comment>
<comment type="similarity">
    <text evidence="1">Belongs to the class-I aminoacyl-tRNA synthetase family.</text>
</comment>
<protein>
    <recommendedName>
        <fullName evidence="1">Arginine--tRNA ligase</fullName>
        <ecNumber evidence="1">6.1.1.19</ecNumber>
    </recommendedName>
    <alternativeName>
        <fullName evidence="1">Arginyl-tRNA synthetase</fullName>
        <shortName evidence="1">ArgRS</shortName>
    </alternativeName>
</protein>
<gene>
    <name evidence="1" type="primary">argS</name>
    <name type="ordered locus">SeHA_C2124</name>
</gene>
<name>SYR_SALHS</name>
<reference key="1">
    <citation type="journal article" date="2011" name="J. Bacteriol.">
        <title>Comparative genomics of 28 Salmonella enterica isolates: evidence for CRISPR-mediated adaptive sublineage evolution.</title>
        <authorList>
            <person name="Fricke W.F."/>
            <person name="Mammel M.K."/>
            <person name="McDermott P.F."/>
            <person name="Tartera C."/>
            <person name="White D.G."/>
            <person name="Leclerc J.E."/>
            <person name="Ravel J."/>
            <person name="Cebula T.A."/>
        </authorList>
    </citation>
    <scope>NUCLEOTIDE SEQUENCE [LARGE SCALE GENOMIC DNA]</scope>
    <source>
        <strain>SL476</strain>
    </source>
</reference>
<accession>B4T808</accession>
<proteinExistence type="inferred from homology"/>
<dbReference type="EC" id="6.1.1.19" evidence="1"/>
<dbReference type="EMBL" id="CP001120">
    <property type="protein sequence ID" value="ACF67644.1"/>
    <property type="molecule type" value="Genomic_DNA"/>
</dbReference>
<dbReference type="RefSeq" id="WP_001025358.1">
    <property type="nucleotide sequence ID" value="NC_011083.1"/>
</dbReference>
<dbReference type="SMR" id="B4T808"/>
<dbReference type="KEGG" id="seh:SeHA_C2124"/>
<dbReference type="HOGENOM" id="CLU_006406_5_1_6"/>
<dbReference type="Proteomes" id="UP000001866">
    <property type="component" value="Chromosome"/>
</dbReference>
<dbReference type="GO" id="GO:0005737">
    <property type="term" value="C:cytoplasm"/>
    <property type="evidence" value="ECO:0007669"/>
    <property type="project" value="UniProtKB-SubCell"/>
</dbReference>
<dbReference type="GO" id="GO:0004814">
    <property type="term" value="F:arginine-tRNA ligase activity"/>
    <property type="evidence" value="ECO:0007669"/>
    <property type="project" value="UniProtKB-UniRule"/>
</dbReference>
<dbReference type="GO" id="GO:0005524">
    <property type="term" value="F:ATP binding"/>
    <property type="evidence" value="ECO:0007669"/>
    <property type="project" value="UniProtKB-UniRule"/>
</dbReference>
<dbReference type="GO" id="GO:0006420">
    <property type="term" value="P:arginyl-tRNA aminoacylation"/>
    <property type="evidence" value="ECO:0007669"/>
    <property type="project" value="UniProtKB-UniRule"/>
</dbReference>
<dbReference type="CDD" id="cd07956">
    <property type="entry name" value="Anticodon_Ia_Arg"/>
    <property type="match status" value="1"/>
</dbReference>
<dbReference type="CDD" id="cd00671">
    <property type="entry name" value="ArgRS_core"/>
    <property type="match status" value="1"/>
</dbReference>
<dbReference type="FunFam" id="1.10.730.10:FF:000001">
    <property type="entry name" value="Arginine--tRNA ligase"/>
    <property type="match status" value="1"/>
</dbReference>
<dbReference type="FunFam" id="3.30.1360.70:FF:000001">
    <property type="entry name" value="Arginine--tRNA ligase"/>
    <property type="match status" value="1"/>
</dbReference>
<dbReference type="FunFam" id="3.40.50.620:FF:000030">
    <property type="entry name" value="Arginine--tRNA ligase"/>
    <property type="match status" value="1"/>
</dbReference>
<dbReference type="Gene3D" id="3.30.1360.70">
    <property type="entry name" value="Arginyl tRNA synthetase N-terminal domain"/>
    <property type="match status" value="1"/>
</dbReference>
<dbReference type="Gene3D" id="3.40.50.620">
    <property type="entry name" value="HUPs"/>
    <property type="match status" value="1"/>
</dbReference>
<dbReference type="Gene3D" id="1.10.730.10">
    <property type="entry name" value="Isoleucyl-tRNA Synthetase, Domain 1"/>
    <property type="match status" value="1"/>
</dbReference>
<dbReference type="HAMAP" id="MF_00123">
    <property type="entry name" value="Arg_tRNA_synth"/>
    <property type="match status" value="1"/>
</dbReference>
<dbReference type="InterPro" id="IPR001412">
    <property type="entry name" value="aa-tRNA-synth_I_CS"/>
</dbReference>
<dbReference type="InterPro" id="IPR001278">
    <property type="entry name" value="Arg-tRNA-ligase"/>
</dbReference>
<dbReference type="InterPro" id="IPR005148">
    <property type="entry name" value="Arg-tRNA-synth_N"/>
</dbReference>
<dbReference type="InterPro" id="IPR036695">
    <property type="entry name" value="Arg-tRNA-synth_N_sf"/>
</dbReference>
<dbReference type="InterPro" id="IPR035684">
    <property type="entry name" value="ArgRS_core"/>
</dbReference>
<dbReference type="InterPro" id="IPR008909">
    <property type="entry name" value="DALR_anticod-bd"/>
</dbReference>
<dbReference type="InterPro" id="IPR014729">
    <property type="entry name" value="Rossmann-like_a/b/a_fold"/>
</dbReference>
<dbReference type="InterPro" id="IPR009080">
    <property type="entry name" value="tRNAsynth_Ia_anticodon-bd"/>
</dbReference>
<dbReference type="NCBIfam" id="TIGR00456">
    <property type="entry name" value="argS"/>
    <property type="match status" value="1"/>
</dbReference>
<dbReference type="PANTHER" id="PTHR11956:SF5">
    <property type="entry name" value="ARGININE--TRNA LIGASE, CYTOPLASMIC"/>
    <property type="match status" value="1"/>
</dbReference>
<dbReference type="PANTHER" id="PTHR11956">
    <property type="entry name" value="ARGINYL-TRNA SYNTHETASE"/>
    <property type="match status" value="1"/>
</dbReference>
<dbReference type="Pfam" id="PF03485">
    <property type="entry name" value="Arg_tRNA_synt_N"/>
    <property type="match status" value="1"/>
</dbReference>
<dbReference type="Pfam" id="PF05746">
    <property type="entry name" value="DALR_1"/>
    <property type="match status" value="1"/>
</dbReference>
<dbReference type="Pfam" id="PF00750">
    <property type="entry name" value="tRNA-synt_1d"/>
    <property type="match status" value="1"/>
</dbReference>
<dbReference type="PRINTS" id="PR01038">
    <property type="entry name" value="TRNASYNTHARG"/>
</dbReference>
<dbReference type="SMART" id="SM01016">
    <property type="entry name" value="Arg_tRNA_synt_N"/>
    <property type="match status" value="1"/>
</dbReference>
<dbReference type="SMART" id="SM00836">
    <property type="entry name" value="DALR_1"/>
    <property type="match status" value="1"/>
</dbReference>
<dbReference type="SUPFAM" id="SSF47323">
    <property type="entry name" value="Anticodon-binding domain of a subclass of class I aminoacyl-tRNA synthetases"/>
    <property type="match status" value="1"/>
</dbReference>
<dbReference type="SUPFAM" id="SSF55190">
    <property type="entry name" value="Arginyl-tRNA synthetase (ArgRS), N-terminal 'additional' domain"/>
    <property type="match status" value="1"/>
</dbReference>
<dbReference type="SUPFAM" id="SSF52374">
    <property type="entry name" value="Nucleotidylyl transferase"/>
    <property type="match status" value="1"/>
</dbReference>
<dbReference type="PROSITE" id="PS00178">
    <property type="entry name" value="AA_TRNA_LIGASE_I"/>
    <property type="match status" value="1"/>
</dbReference>
<keyword id="KW-0030">Aminoacyl-tRNA synthetase</keyword>
<keyword id="KW-0067">ATP-binding</keyword>
<keyword id="KW-0963">Cytoplasm</keyword>
<keyword id="KW-0436">Ligase</keyword>
<keyword id="KW-0547">Nucleotide-binding</keyword>
<keyword id="KW-0648">Protein biosynthesis</keyword>
<sequence length="577" mass="64246">MNIQALLSEKVSQAMIAAGAPADCEPQVRQSAKVQFGDYQANGMMAVAKKLGMAPRQLAEQVLTHLDLSGIASKVEIAGPGFINIFLEPAFLAEQVQQALASDRLGVSQPTRQTIVVDYSAPNVAKEMHVGHLRSTIIGDAAVRTLEFLGHHVIRANHVGDWGTQFGMLIAWLEKQQQENAGDMALADLEGFYRDAKKHYDEDEAFAERARNYVVKLQSGDAYFREMWRKLVDITMTQNQITYDRLNVTLTRDDVMGESLYNPMLPGIVADLKAKGLAVESEGATVVFLDEFKNKEGDPMGVIIQKKDGGYLYTTTDIACAKYRYETLHADRVLYYIDSRQHQHLMQAWTIVRKAGYVPDSVPLEHHMFGMMLGKDGKPFKTRAGGTVKLADLLDEALERARRLVAEKNPDMPADELEKLANAVGIGAVKYADLSKNRTTDYIFDWDNMLAFEGNTAPYMQYAYTRVLSVFRKADIDEQALASAPVIISEDREAQLAARLLQFEETLTVVAREGTPHVMCAYLYDVAGLFSGFYEHCPILSAENDAVRNSRLKLAQLTAKTLKLGLDTLGIETVERM</sequence>
<evidence type="ECO:0000255" key="1">
    <source>
        <dbReference type="HAMAP-Rule" id="MF_00123"/>
    </source>
</evidence>
<organism>
    <name type="scientific">Salmonella heidelberg (strain SL476)</name>
    <dbReference type="NCBI Taxonomy" id="454169"/>
    <lineage>
        <taxon>Bacteria</taxon>
        <taxon>Pseudomonadati</taxon>
        <taxon>Pseudomonadota</taxon>
        <taxon>Gammaproteobacteria</taxon>
        <taxon>Enterobacterales</taxon>
        <taxon>Enterobacteriaceae</taxon>
        <taxon>Salmonella</taxon>
    </lineage>
</organism>